<organism>
    <name type="scientific">Escherichia coli O7:K1 (strain IAI39 / ExPEC)</name>
    <dbReference type="NCBI Taxonomy" id="585057"/>
    <lineage>
        <taxon>Bacteria</taxon>
        <taxon>Pseudomonadati</taxon>
        <taxon>Pseudomonadota</taxon>
        <taxon>Gammaproteobacteria</taxon>
        <taxon>Enterobacterales</taxon>
        <taxon>Enterobacteriaceae</taxon>
        <taxon>Escherichia</taxon>
    </lineage>
</organism>
<proteinExistence type="inferred from homology"/>
<name>RL31B_ECO7I</name>
<sequence length="87" mass="9920">MKPNIHPEYRTVVFHDTSVDEYFKIGSTIKTDREIELDGVTYPYVTIDVSSKSHPFYTGKLRTVASEGNVARFTQRFGRFVSTKKGA</sequence>
<evidence type="ECO:0000255" key="1">
    <source>
        <dbReference type="HAMAP-Rule" id="MF_00502"/>
    </source>
</evidence>
<evidence type="ECO:0000305" key="2"/>
<reference key="1">
    <citation type="journal article" date="2009" name="PLoS Genet.">
        <title>Organised genome dynamics in the Escherichia coli species results in highly diverse adaptive paths.</title>
        <authorList>
            <person name="Touchon M."/>
            <person name="Hoede C."/>
            <person name="Tenaillon O."/>
            <person name="Barbe V."/>
            <person name="Baeriswyl S."/>
            <person name="Bidet P."/>
            <person name="Bingen E."/>
            <person name="Bonacorsi S."/>
            <person name="Bouchier C."/>
            <person name="Bouvet O."/>
            <person name="Calteau A."/>
            <person name="Chiapello H."/>
            <person name="Clermont O."/>
            <person name="Cruveiller S."/>
            <person name="Danchin A."/>
            <person name="Diard M."/>
            <person name="Dossat C."/>
            <person name="Karoui M.E."/>
            <person name="Frapy E."/>
            <person name="Garry L."/>
            <person name="Ghigo J.M."/>
            <person name="Gilles A.M."/>
            <person name="Johnson J."/>
            <person name="Le Bouguenec C."/>
            <person name="Lescat M."/>
            <person name="Mangenot S."/>
            <person name="Martinez-Jehanne V."/>
            <person name="Matic I."/>
            <person name="Nassif X."/>
            <person name="Oztas S."/>
            <person name="Petit M.A."/>
            <person name="Pichon C."/>
            <person name="Rouy Z."/>
            <person name="Ruf C.S."/>
            <person name="Schneider D."/>
            <person name="Tourret J."/>
            <person name="Vacherie B."/>
            <person name="Vallenet D."/>
            <person name="Medigue C."/>
            <person name="Rocha E.P.C."/>
            <person name="Denamur E."/>
        </authorList>
    </citation>
    <scope>NUCLEOTIDE SEQUENCE [LARGE SCALE GENOMIC DNA]</scope>
    <source>
        <strain>IAI39 / ExPEC</strain>
    </source>
</reference>
<protein>
    <recommendedName>
        <fullName evidence="1">Large ribosomal subunit protein bL31B</fullName>
    </recommendedName>
    <alternativeName>
        <fullName evidence="2">50S ribosomal protein L31 type B</fullName>
    </alternativeName>
</protein>
<gene>
    <name evidence="1" type="primary">rpmE2</name>
    <name type="ordered locus">ECIAI39_0394</name>
</gene>
<dbReference type="EMBL" id="CU928164">
    <property type="protein sequence ID" value="CAR16534.1"/>
    <property type="molecule type" value="Genomic_DNA"/>
</dbReference>
<dbReference type="RefSeq" id="WP_000803998.1">
    <property type="nucleotide sequence ID" value="NC_011750.1"/>
</dbReference>
<dbReference type="RefSeq" id="YP_002406431.1">
    <property type="nucleotide sequence ID" value="NC_011750.1"/>
</dbReference>
<dbReference type="SMR" id="B7NK70"/>
<dbReference type="STRING" id="585057.ECIAI39_0394"/>
<dbReference type="KEGG" id="ect:ECIAI39_0394"/>
<dbReference type="PATRIC" id="fig|585057.6.peg.423"/>
<dbReference type="HOGENOM" id="CLU_114306_2_1_6"/>
<dbReference type="Proteomes" id="UP000000749">
    <property type="component" value="Chromosome"/>
</dbReference>
<dbReference type="GO" id="GO:1990904">
    <property type="term" value="C:ribonucleoprotein complex"/>
    <property type="evidence" value="ECO:0007669"/>
    <property type="project" value="UniProtKB-KW"/>
</dbReference>
<dbReference type="GO" id="GO:0005840">
    <property type="term" value="C:ribosome"/>
    <property type="evidence" value="ECO:0007669"/>
    <property type="project" value="UniProtKB-KW"/>
</dbReference>
<dbReference type="GO" id="GO:0003735">
    <property type="term" value="F:structural constituent of ribosome"/>
    <property type="evidence" value="ECO:0007669"/>
    <property type="project" value="InterPro"/>
</dbReference>
<dbReference type="GO" id="GO:0006412">
    <property type="term" value="P:translation"/>
    <property type="evidence" value="ECO:0007669"/>
    <property type="project" value="UniProtKB-UniRule"/>
</dbReference>
<dbReference type="FunFam" id="4.10.830.30:FF:000002">
    <property type="entry name" value="50S ribosomal protein L31 type B"/>
    <property type="match status" value="1"/>
</dbReference>
<dbReference type="Gene3D" id="4.10.830.30">
    <property type="entry name" value="Ribosomal protein L31"/>
    <property type="match status" value="1"/>
</dbReference>
<dbReference type="HAMAP" id="MF_00502">
    <property type="entry name" value="Ribosomal_bL31_2"/>
    <property type="match status" value="1"/>
</dbReference>
<dbReference type="InterPro" id="IPR034704">
    <property type="entry name" value="Ribosomal_bL28/bL31-like_sf"/>
</dbReference>
<dbReference type="InterPro" id="IPR002150">
    <property type="entry name" value="Ribosomal_bL31"/>
</dbReference>
<dbReference type="InterPro" id="IPR027493">
    <property type="entry name" value="Ribosomal_bL31_B"/>
</dbReference>
<dbReference type="InterPro" id="IPR042105">
    <property type="entry name" value="Ribosomal_bL31_sf"/>
</dbReference>
<dbReference type="NCBIfam" id="TIGR00105">
    <property type="entry name" value="L31"/>
    <property type="match status" value="1"/>
</dbReference>
<dbReference type="NCBIfam" id="NF002462">
    <property type="entry name" value="PRK01678.1"/>
    <property type="match status" value="1"/>
</dbReference>
<dbReference type="PANTHER" id="PTHR33280">
    <property type="entry name" value="50S RIBOSOMAL PROTEIN L31, CHLOROPLASTIC"/>
    <property type="match status" value="1"/>
</dbReference>
<dbReference type="PANTHER" id="PTHR33280:SF1">
    <property type="entry name" value="LARGE RIBOSOMAL SUBUNIT PROTEIN BL31C"/>
    <property type="match status" value="1"/>
</dbReference>
<dbReference type="Pfam" id="PF01197">
    <property type="entry name" value="Ribosomal_L31"/>
    <property type="match status" value="1"/>
</dbReference>
<dbReference type="PRINTS" id="PR01249">
    <property type="entry name" value="RIBOSOMALL31"/>
</dbReference>
<dbReference type="SUPFAM" id="SSF143800">
    <property type="entry name" value="L28p-like"/>
    <property type="match status" value="1"/>
</dbReference>
<dbReference type="PROSITE" id="PS01143">
    <property type="entry name" value="RIBOSOMAL_L31"/>
    <property type="match status" value="1"/>
</dbReference>
<accession>B7NK70</accession>
<feature type="chain" id="PRO_1000126803" description="Large ribosomal subunit protein bL31B">
    <location>
        <begin position="1"/>
        <end position="87"/>
    </location>
</feature>
<keyword id="KW-0687">Ribonucleoprotein</keyword>
<keyword id="KW-0689">Ribosomal protein</keyword>
<comment type="subunit">
    <text evidence="1">Part of the 50S ribosomal subunit.</text>
</comment>
<comment type="similarity">
    <text evidence="1">Belongs to the bacterial ribosomal protein bL31 family. Type B subfamily.</text>
</comment>